<proteinExistence type="inferred from homology"/>
<sequence>MKLRGLYAITDSQLLAGKFLSYVEAALEGGVTLLQYRDKSSDEARRLREAEALRDLCERYKTQLIINDDAELAARLNVGVHLGQTDGPLSPTRALLGYKAIIGSTCHAQLELAEQAAREGASYVAFGRFFNSNTKPGAPSCSLDLLDEAKRTLHLPICAIGGITLDNAAPLVAHGVDLLAVVHGLFGANSTAEVTRRARAFNELLKV</sequence>
<organism>
    <name type="scientific">Pseudomonas fluorescens (strain Pf0-1)</name>
    <dbReference type="NCBI Taxonomy" id="205922"/>
    <lineage>
        <taxon>Bacteria</taxon>
        <taxon>Pseudomonadati</taxon>
        <taxon>Pseudomonadota</taxon>
        <taxon>Gammaproteobacteria</taxon>
        <taxon>Pseudomonadales</taxon>
        <taxon>Pseudomonadaceae</taxon>
        <taxon>Pseudomonas</taxon>
    </lineage>
</organism>
<reference key="1">
    <citation type="journal article" date="2009" name="Genome Biol.">
        <title>Genomic and genetic analyses of diversity and plant interactions of Pseudomonas fluorescens.</title>
        <authorList>
            <person name="Silby M.W."/>
            <person name="Cerdeno-Tarraga A.M."/>
            <person name="Vernikos G.S."/>
            <person name="Giddens S.R."/>
            <person name="Jackson R.W."/>
            <person name="Preston G.M."/>
            <person name="Zhang X.-X."/>
            <person name="Moon C.D."/>
            <person name="Gehrig S.M."/>
            <person name="Godfrey S.A.C."/>
            <person name="Knight C.G."/>
            <person name="Malone J.G."/>
            <person name="Robinson Z."/>
            <person name="Spiers A.J."/>
            <person name="Harris S."/>
            <person name="Challis G.L."/>
            <person name="Yaxley A.M."/>
            <person name="Harris D."/>
            <person name="Seeger K."/>
            <person name="Murphy L."/>
            <person name="Rutter S."/>
            <person name="Squares R."/>
            <person name="Quail M.A."/>
            <person name="Saunders E."/>
            <person name="Mavromatis K."/>
            <person name="Brettin T.S."/>
            <person name="Bentley S.D."/>
            <person name="Hothersall J."/>
            <person name="Stephens E."/>
            <person name="Thomas C.M."/>
            <person name="Parkhill J."/>
            <person name="Levy S.B."/>
            <person name="Rainey P.B."/>
            <person name="Thomson N.R."/>
        </authorList>
    </citation>
    <scope>NUCLEOTIDE SEQUENCE [LARGE SCALE GENOMIC DNA]</scope>
    <source>
        <strain>Pf0-1</strain>
    </source>
</reference>
<evidence type="ECO:0000255" key="1">
    <source>
        <dbReference type="HAMAP-Rule" id="MF_00097"/>
    </source>
</evidence>
<feature type="chain" id="PRO_1000008165" description="Thiamine-phosphate synthase">
    <location>
        <begin position="1"/>
        <end position="207"/>
    </location>
</feature>
<feature type="binding site" evidence="1">
    <location>
        <begin position="35"/>
        <end position="39"/>
    </location>
    <ligand>
        <name>4-amino-2-methyl-5-(diphosphooxymethyl)pyrimidine</name>
        <dbReference type="ChEBI" id="CHEBI:57841"/>
    </ligand>
</feature>
<feature type="binding site" evidence="1">
    <location>
        <position position="67"/>
    </location>
    <ligand>
        <name>4-amino-2-methyl-5-(diphosphooxymethyl)pyrimidine</name>
        <dbReference type="ChEBI" id="CHEBI:57841"/>
    </ligand>
</feature>
<feature type="binding site" evidence="1">
    <location>
        <position position="68"/>
    </location>
    <ligand>
        <name>Mg(2+)</name>
        <dbReference type="ChEBI" id="CHEBI:18420"/>
    </ligand>
</feature>
<feature type="binding site" evidence="1">
    <location>
        <position position="86"/>
    </location>
    <ligand>
        <name>Mg(2+)</name>
        <dbReference type="ChEBI" id="CHEBI:18420"/>
    </ligand>
</feature>
<feature type="binding site" evidence="1">
    <location>
        <position position="105"/>
    </location>
    <ligand>
        <name>4-amino-2-methyl-5-(diphosphooxymethyl)pyrimidine</name>
        <dbReference type="ChEBI" id="CHEBI:57841"/>
    </ligand>
</feature>
<feature type="binding site" evidence="1">
    <location>
        <begin position="132"/>
        <end position="134"/>
    </location>
    <ligand>
        <name>2-[(2R,5Z)-2-carboxy-4-methylthiazol-5(2H)-ylidene]ethyl phosphate</name>
        <dbReference type="ChEBI" id="CHEBI:62899"/>
    </ligand>
</feature>
<feature type="binding site" evidence="1">
    <location>
        <position position="135"/>
    </location>
    <ligand>
        <name>4-amino-2-methyl-5-(diphosphooxymethyl)pyrimidine</name>
        <dbReference type="ChEBI" id="CHEBI:57841"/>
    </ligand>
</feature>
<feature type="binding site" evidence="1">
    <location>
        <position position="162"/>
    </location>
    <ligand>
        <name>2-[(2R,5Z)-2-carboxy-4-methylthiazol-5(2H)-ylidene]ethyl phosphate</name>
        <dbReference type="ChEBI" id="CHEBI:62899"/>
    </ligand>
</feature>
<accession>Q3K6C1</accession>
<dbReference type="EC" id="2.5.1.3" evidence="1"/>
<dbReference type="EMBL" id="CP000094">
    <property type="protein sequence ID" value="ABA76683.1"/>
    <property type="molecule type" value="Genomic_DNA"/>
</dbReference>
<dbReference type="RefSeq" id="WP_011336080.1">
    <property type="nucleotide sequence ID" value="NC_007492.2"/>
</dbReference>
<dbReference type="SMR" id="Q3K6C1"/>
<dbReference type="KEGG" id="pfo:Pfl01_4946"/>
<dbReference type="eggNOG" id="COG0352">
    <property type="taxonomic scope" value="Bacteria"/>
</dbReference>
<dbReference type="HOGENOM" id="CLU_018272_3_1_6"/>
<dbReference type="UniPathway" id="UPA00060">
    <property type="reaction ID" value="UER00141"/>
</dbReference>
<dbReference type="Proteomes" id="UP000002704">
    <property type="component" value="Chromosome"/>
</dbReference>
<dbReference type="GO" id="GO:0005737">
    <property type="term" value="C:cytoplasm"/>
    <property type="evidence" value="ECO:0007669"/>
    <property type="project" value="TreeGrafter"/>
</dbReference>
<dbReference type="GO" id="GO:0000287">
    <property type="term" value="F:magnesium ion binding"/>
    <property type="evidence" value="ECO:0007669"/>
    <property type="project" value="UniProtKB-UniRule"/>
</dbReference>
<dbReference type="GO" id="GO:0004789">
    <property type="term" value="F:thiamine-phosphate diphosphorylase activity"/>
    <property type="evidence" value="ECO:0007669"/>
    <property type="project" value="UniProtKB-UniRule"/>
</dbReference>
<dbReference type="GO" id="GO:0009228">
    <property type="term" value="P:thiamine biosynthetic process"/>
    <property type="evidence" value="ECO:0007669"/>
    <property type="project" value="UniProtKB-KW"/>
</dbReference>
<dbReference type="GO" id="GO:0009229">
    <property type="term" value="P:thiamine diphosphate biosynthetic process"/>
    <property type="evidence" value="ECO:0007669"/>
    <property type="project" value="UniProtKB-UniRule"/>
</dbReference>
<dbReference type="CDD" id="cd00564">
    <property type="entry name" value="TMP_TenI"/>
    <property type="match status" value="1"/>
</dbReference>
<dbReference type="Gene3D" id="3.20.20.70">
    <property type="entry name" value="Aldolase class I"/>
    <property type="match status" value="1"/>
</dbReference>
<dbReference type="HAMAP" id="MF_00097">
    <property type="entry name" value="TMP_synthase"/>
    <property type="match status" value="1"/>
</dbReference>
<dbReference type="InterPro" id="IPR013785">
    <property type="entry name" value="Aldolase_TIM"/>
</dbReference>
<dbReference type="InterPro" id="IPR036206">
    <property type="entry name" value="ThiamineP_synth_sf"/>
</dbReference>
<dbReference type="InterPro" id="IPR022998">
    <property type="entry name" value="ThiamineP_synth_TenI"/>
</dbReference>
<dbReference type="InterPro" id="IPR034291">
    <property type="entry name" value="TMP_synthase"/>
</dbReference>
<dbReference type="NCBIfam" id="TIGR00693">
    <property type="entry name" value="thiE"/>
    <property type="match status" value="1"/>
</dbReference>
<dbReference type="PANTHER" id="PTHR20857">
    <property type="entry name" value="THIAMINE-PHOSPHATE PYROPHOSPHORYLASE"/>
    <property type="match status" value="1"/>
</dbReference>
<dbReference type="PANTHER" id="PTHR20857:SF15">
    <property type="entry name" value="THIAMINE-PHOSPHATE SYNTHASE"/>
    <property type="match status" value="1"/>
</dbReference>
<dbReference type="Pfam" id="PF02581">
    <property type="entry name" value="TMP-TENI"/>
    <property type="match status" value="1"/>
</dbReference>
<dbReference type="SUPFAM" id="SSF51391">
    <property type="entry name" value="Thiamin phosphate synthase"/>
    <property type="match status" value="1"/>
</dbReference>
<name>THIE_PSEPF</name>
<keyword id="KW-0460">Magnesium</keyword>
<keyword id="KW-0479">Metal-binding</keyword>
<keyword id="KW-0784">Thiamine biosynthesis</keyword>
<keyword id="KW-0808">Transferase</keyword>
<gene>
    <name evidence="1" type="primary">thiE</name>
    <name type="ordered locus">Pfl01_4946</name>
</gene>
<comment type="function">
    <text evidence="1">Condenses 4-methyl-5-(beta-hydroxyethyl)thiazole monophosphate (THZ-P) and 2-methyl-4-amino-5-hydroxymethyl pyrimidine pyrophosphate (HMP-PP) to form thiamine monophosphate (TMP).</text>
</comment>
<comment type="catalytic activity">
    <reaction evidence="1">
        <text>2-[(2R,5Z)-2-carboxy-4-methylthiazol-5(2H)-ylidene]ethyl phosphate + 4-amino-2-methyl-5-(diphosphooxymethyl)pyrimidine + 2 H(+) = thiamine phosphate + CO2 + diphosphate</text>
        <dbReference type="Rhea" id="RHEA:47844"/>
        <dbReference type="ChEBI" id="CHEBI:15378"/>
        <dbReference type="ChEBI" id="CHEBI:16526"/>
        <dbReference type="ChEBI" id="CHEBI:33019"/>
        <dbReference type="ChEBI" id="CHEBI:37575"/>
        <dbReference type="ChEBI" id="CHEBI:57841"/>
        <dbReference type="ChEBI" id="CHEBI:62899"/>
        <dbReference type="EC" id="2.5.1.3"/>
    </reaction>
</comment>
<comment type="catalytic activity">
    <reaction evidence="1">
        <text>2-(2-carboxy-4-methylthiazol-5-yl)ethyl phosphate + 4-amino-2-methyl-5-(diphosphooxymethyl)pyrimidine + 2 H(+) = thiamine phosphate + CO2 + diphosphate</text>
        <dbReference type="Rhea" id="RHEA:47848"/>
        <dbReference type="ChEBI" id="CHEBI:15378"/>
        <dbReference type="ChEBI" id="CHEBI:16526"/>
        <dbReference type="ChEBI" id="CHEBI:33019"/>
        <dbReference type="ChEBI" id="CHEBI:37575"/>
        <dbReference type="ChEBI" id="CHEBI:57841"/>
        <dbReference type="ChEBI" id="CHEBI:62890"/>
        <dbReference type="EC" id="2.5.1.3"/>
    </reaction>
</comment>
<comment type="catalytic activity">
    <reaction evidence="1">
        <text>4-methyl-5-(2-phosphooxyethyl)-thiazole + 4-amino-2-methyl-5-(diphosphooxymethyl)pyrimidine + H(+) = thiamine phosphate + diphosphate</text>
        <dbReference type="Rhea" id="RHEA:22328"/>
        <dbReference type="ChEBI" id="CHEBI:15378"/>
        <dbReference type="ChEBI" id="CHEBI:33019"/>
        <dbReference type="ChEBI" id="CHEBI:37575"/>
        <dbReference type="ChEBI" id="CHEBI:57841"/>
        <dbReference type="ChEBI" id="CHEBI:58296"/>
        <dbReference type="EC" id="2.5.1.3"/>
    </reaction>
</comment>
<comment type="cofactor">
    <cofactor evidence="1">
        <name>Mg(2+)</name>
        <dbReference type="ChEBI" id="CHEBI:18420"/>
    </cofactor>
    <text evidence="1">Binds 1 Mg(2+) ion per subunit.</text>
</comment>
<comment type="pathway">
    <text evidence="1">Cofactor biosynthesis; thiamine diphosphate biosynthesis; thiamine phosphate from 4-amino-2-methyl-5-diphosphomethylpyrimidine and 4-methyl-5-(2-phosphoethyl)-thiazole: step 1/1.</text>
</comment>
<comment type="similarity">
    <text evidence="1">Belongs to the thiamine-phosphate synthase family.</text>
</comment>
<protein>
    <recommendedName>
        <fullName evidence="1">Thiamine-phosphate synthase</fullName>
        <shortName evidence="1">TP synthase</shortName>
        <shortName evidence="1">TPS</shortName>
        <ecNumber evidence="1">2.5.1.3</ecNumber>
    </recommendedName>
    <alternativeName>
        <fullName evidence="1">Thiamine-phosphate pyrophosphorylase</fullName>
        <shortName evidence="1">TMP pyrophosphorylase</shortName>
        <shortName evidence="1">TMP-PPase</shortName>
    </alternativeName>
</protein>